<comment type="catalytic activity">
    <reaction evidence="1">
        <text>1-(5-phospho-beta-D-ribosyl)-5-[(5-phospho-beta-D-ribosylamino)methylideneamino]imidazole-4-carboxamide = 5-[(5-phospho-1-deoxy-D-ribulos-1-ylimino)methylamino]-1-(5-phospho-beta-D-ribosyl)imidazole-4-carboxamide</text>
        <dbReference type="Rhea" id="RHEA:15469"/>
        <dbReference type="ChEBI" id="CHEBI:58435"/>
        <dbReference type="ChEBI" id="CHEBI:58525"/>
        <dbReference type="EC" id="5.3.1.16"/>
    </reaction>
</comment>
<comment type="pathway">
    <text evidence="1">Amino-acid biosynthesis; L-histidine biosynthesis; L-histidine from 5-phospho-alpha-D-ribose 1-diphosphate: step 4/9.</text>
</comment>
<comment type="subcellular location">
    <subcellularLocation>
        <location evidence="1">Cytoplasm</location>
    </subcellularLocation>
</comment>
<comment type="similarity">
    <text evidence="1">Belongs to the HisA/HisF family.</text>
</comment>
<feature type="chain" id="PRO_1000063233" description="1-(5-phosphoribosyl)-5-[(5-phosphoribosylamino)methylideneamino] imidazole-4-carboxamide isomerase">
    <location>
        <begin position="1"/>
        <end position="245"/>
    </location>
</feature>
<feature type="active site" description="Proton acceptor" evidence="1">
    <location>
        <position position="7"/>
    </location>
</feature>
<feature type="active site" description="Proton donor" evidence="1">
    <location>
        <position position="129"/>
    </location>
</feature>
<protein>
    <recommendedName>
        <fullName evidence="1">1-(5-phosphoribosyl)-5-[(5-phosphoribosylamino)methylideneamino] imidazole-4-carboxamide isomerase</fullName>
        <ecNumber evidence="1">5.3.1.16</ecNumber>
    </recommendedName>
    <alternativeName>
        <fullName evidence="1">Phosphoribosylformimino-5-aminoimidazole carboxamide ribotide isomerase</fullName>
    </alternativeName>
</protein>
<keyword id="KW-0028">Amino-acid biosynthesis</keyword>
<keyword id="KW-0963">Cytoplasm</keyword>
<keyword id="KW-0368">Histidine biosynthesis</keyword>
<keyword id="KW-0413">Isomerase</keyword>
<dbReference type="EC" id="5.3.1.16" evidence="1"/>
<dbReference type="EMBL" id="CP000681">
    <property type="protein sequence ID" value="ABP75904.1"/>
    <property type="molecule type" value="Genomic_DNA"/>
</dbReference>
<dbReference type="SMR" id="A4Y7H1"/>
<dbReference type="STRING" id="319224.Sputcn32_2183"/>
<dbReference type="KEGG" id="spc:Sputcn32_2183"/>
<dbReference type="eggNOG" id="COG0106">
    <property type="taxonomic scope" value="Bacteria"/>
</dbReference>
<dbReference type="HOGENOM" id="CLU_048577_1_2_6"/>
<dbReference type="UniPathway" id="UPA00031">
    <property type="reaction ID" value="UER00009"/>
</dbReference>
<dbReference type="GO" id="GO:0005737">
    <property type="term" value="C:cytoplasm"/>
    <property type="evidence" value="ECO:0007669"/>
    <property type="project" value="UniProtKB-SubCell"/>
</dbReference>
<dbReference type="GO" id="GO:0003949">
    <property type="term" value="F:1-(5-phosphoribosyl)-5-[(5-phosphoribosylamino)methylideneamino]imidazole-4-carboxamide isomerase activity"/>
    <property type="evidence" value="ECO:0007669"/>
    <property type="project" value="UniProtKB-UniRule"/>
</dbReference>
<dbReference type="GO" id="GO:0000105">
    <property type="term" value="P:L-histidine biosynthetic process"/>
    <property type="evidence" value="ECO:0007669"/>
    <property type="project" value="UniProtKB-UniRule"/>
</dbReference>
<dbReference type="GO" id="GO:0000162">
    <property type="term" value="P:L-tryptophan biosynthetic process"/>
    <property type="evidence" value="ECO:0007669"/>
    <property type="project" value="TreeGrafter"/>
</dbReference>
<dbReference type="CDD" id="cd04732">
    <property type="entry name" value="HisA"/>
    <property type="match status" value="1"/>
</dbReference>
<dbReference type="FunFam" id="3.20.20.70:FF:000009">
    <property type="entry name" value="1-(5-phosphoribosyl)-5-[(5-phosphoribosylamino)methylideneamino] imidazole-4-carboxamide isomerase"/>
    <property type="match status" value="1"/>
</dbReference>
<dbReference type="Gene3D" id="3.20.20.70">
    <property type="entry name" value="Aldolase class I"/>
    <property type="match status" value="1"/>
</dbReference>
<dbReference type="HAMAP" id="MF_01014">
    <property type="entry name" value="HisA"/>
    <property type="match status" value="1"/>
</dbReference>
<dbReference type="InterPro" id="IPR013785">
    <property type="entry name" value="Aldolase_TIM"/>
</dbReference>
<dbReference type="InterPro" id="IPR006062">
    <property type="entry name" value="His_biosynth"/>
</dbReference>
<dbReference type="InterPro" id="IPR006063">
    <property type="entry name" value="HisA_bact_arch"/>
</dbReference>
<dbReference type="InterPro" id="IPR044524">
    <property type="entry name" value="Isoase_HisA-like"/>
</dbReference>
<dbReference type="InterPro" id="IPR023016">
    <property type="entry name" value="Isoase_HisA-like_bact"/>
</dbReference>
<dbReference type="InterPro" id="IPR011060">
    <property type="entry name" value="RibuloseP-bd_barrel"/>
</dbReference>
<dbReference type="NCBIfam" id="TIGR00007">
    <property type="entry name" value="1-(5-phosphoribosyl)-5-[(5-phosphoribosylamino)methylideneamino]imidazole-4-carboxamide isomerase"/>
    <property type="match status" value="1"/>
</dbReference>
<dbReference type="PANTHER" id="PTHR43090">
    <property type="entry name" value="1-(5-PHOSPHORIBOSYL)-5-[(5-PHOSPHORIBOSYLAMINO)METHYLIDENEAMINO] IMIDAZOLE-4-CARBOXAMIDE ISOMERASE"/>
    <property type="match status" value="1"/>
</dbReference>
<dbReference type="PANTHER" id="PTHR43090:SF2">
    <property type="entry name" value="1-(5-PHOSPHORIBOSYL)-5-[(5-PHOSPHORIBOSYLAMINO)METHYLIDENEAMINO] IMIDAZOLE-4-CARBOXAMIDE ISOMERASE"/>
    <property type="match status" value="1"/>
</dbReference>
<dbReference type="Pfam" id="PF00977">
    <property type="entry name" value="His_biosynth"/>
    <property type="match status" value="1"/>
</dbReference>
<dbReference type="SUPFAM" id="SSF51366">
    <property type="entry name" value="Ribulose-phoshate binding barrel"/>
    <property type="match status" value="1"/>
</dbReference>
<gene>
    <name evidence="1" type="primary">hisA</name>
    <name type="ordered locus">Sputcn32_2183</name>
</gene>
<reference key="1">
    <citation type="submission" date="2007-04" db="EMBL/GenBank/DDBJ databases">
        <title>Complete sequence of Shewanella putrefaciens CN-32.</title>
        <authorList>
            <consortium name="US DOE Joint Genome Institute"/>
            <person name="Copeland A."/>
            <person name="Lucas S."/>
            <person name="Lapidus A."/>
            <person name="Barry K."/>
            <person name="Detter J.C."/>
            <person name="Glavina del Rio T."/>
            <person name="Hammon N."/>
            <person name="Israni S."/>
            <person name="Dalin E."/>
            <person name="Tice H."/>
            <person name="Pitluck S."/>
            <person name="Chain P."/>
            <person name="Malfatti S."/>
            <person name="Shin M."/>
            <person name="Vergez L."/>
            <person name="Schmutz J."/>
            <person name="Larimer F."/>
            <person name="Land M."/>
            <person name="Hauser L."/>
            <person name="Kyrpides N."/>
            <person name="Mikhailova N."/>
            <person name="Romine M.F."/>
            <person name="Fredrickson J."/>
            <person name="Tiedje J."/>
            <person name="Richardson P."/>
        </authorList>
    </citation>
    <scope>NUCLEOTIDE SEQUENCE [LARGE SCALE GENOMIC DNA]</scope>
    <source>
        <strain>CN-32 / ATCC BAA-453</strain>
    </source>
</reference>
<evidence type="ECO:0000255" key="1">
    <source>
        <dbReference type="HAMAP-Rule" id="MF_01014"/>
    </source>
</evidence>
<accession>A4Y7H1</accession>
<name>HIS4_SHEPC</name>
<sequence length="245" mass="26133">MIIPAIDLIDGNVVRLYQGDYGQQTTFDLSPLAQLQSYEAQGAKWLHIVDLTGAKDPAKRQTRLISELVAELNANIQVGGGIRTEEQVTELLAIGVKRVVIGSLAVKEPELVKQWFIKYGSEAICLALDVNINQSGEKMVAVSGWQSGGGKSLESLVETFSAVGLKHALVTDISRDGTLTGANTALYQEIAAIYPDIAWQASGGIATLEDVAAVRDSGAAGIIIGKALLINQFNVAEAIQCWPND</sequence>
<proteinExistence type="inferred from homology"/>
<organism>
    <name type="scientific">Shewanella putrefaciens (strain CN-32 / ATCC BAA-453)</name>
    <dbReference type="NCBI Taxonomy" id="319224"/>
    <lineage>
        <taxon>Bacteria</taxon>
        <taxon>Pseudomonadati</taxon>
        <taxon>Pseudomonadota</taxon>
        <taxon>Gammaproteobacteria</taxon>
        <taxon>Alteromonadales</taxon>
        <taxon>Shewanellaceae</taxon>
        <taxon>Shewanella</taxon>
    </lineage>
</organism>